<accession>Q11G43</accession>
<keyword id="KW-0056">Arginine metabolism</keyword>
<keyword id="KW-0963">Cytoplasm</keyword>
<keyword id="KW-0378">Hydrolase</keyword>
<protein>
    <recommendedName>
        <fullName evidence="1">Arginine deiminase</fullName>
        <shortName evidence="1">ADI</shortName>
        <ecNumber evidence="1">3.5.3.6</ecNumber>
    </recommendedName>
    <alternativeName>
        <fullName evidence="1">Arginine dihydrolase</fullName>
        <shortName evidence="1">AD</shortName>
    </alternativeName>
</protein>
<feature type="chain" id="PRO_1000058987" description="Arginine deiminase">
    <location>
        <begin position="1"/>
        <end position="408"/>
    </location>
</feature>
<feature type="active site" description="Amidino-cysteine intermediate" evidence="1">
    <location>
        <position position="398"/>
    </location>
</feature>
<name>ARCA_CHESB</name>
<dbReference type="EC" id="3.5.3.6" evidence="1"/>
<dbReference type="EMBL" id="CP000390">
    <property type="protein sequence ID" value="ABG63632.1"/>
    <property type="molecule type" value="Genomic_DNA"/>
</dbReference>
<dbReference type="SMR" id="Q11G43"/>
<dbReference type="STRING" id="266779.Meso_2241"/>
<dbReference type="KEGG" id="mes:Meso_2241"/>
<dbReference type="eggNOG" id="COG2235">
    <property type="taxonomic scope" value="Bacteria"/>
</dbReference>
<dbReference type="HOGENOM" id="CLU_052662_0_0_5"/>
<dbReference type="OrthoDB" id="9807502at2"/>
<dbReference type="UniPathway" id="UPA00254">
    <property type="reaction ID" value="UER00364"/>
</dbReference>
<dbReference type="GO" id="GO:0005737">
    <property type="term" value="C:cytoplasm"/>
    <property type="evidence" value="ECO:0007669"/>
    <property type="project" value="UniProtKB-SubCell"/>
</dbReference>
<dbReference type="GO" id="GO:0016990">
    <property type="term" value="F:arginine deiminase activity"/>
    <property type="evidence" value="ECO:0007669"/>
    <property type="project" value="UniProtKB-UniRule"/>
</dbReference>
<dbReference type="GO" id="GO:0019547">
    <property type="term" value="P:arginine catabolic process to ornithine"/>
    <property type="evidence" value="ECO:0007669"/>
    <property type="project" value="UniProtKB-UniRule"/>
</dbReference>
<dbReference type="GO" id="GO:0019546">
    <property type="term" value="P:arginine deiminase pathway"/>
    <property type="evidence" value="ECO:0007669"/>
    <property type="project" value="TreeGrafter"/>
</dbReference>
<dbReference type="Gene3D" id="1.10.3930.10">
    <property type="entry name" value="Arginine deiminase"/>
    <property type="match status" value="1"/>
</dbReference>
<dbReference type="Gene3D" id="3.75.10.10">
    <property type="entry name" value="L-arginine/glycine Amidinotransferase, Chain A"/>
    <property type="match status" value="1"/>
</dbReference>
<dbReference type="HAMAP" id="MF_00242">
    <property type="entry name" value="Arg_deiminase"/>
    <property type="match status" value="1"/>
</dbReference>
<dbReference type="InterPro" id="IPR003876">
    <property type="entry name" value="Arg_deiminase"/>
</dbReference>
<dbReference type="NCBIfam" id="TIGR01078">
    <property type="entry name" value="arcA"/>
    <property type="match status" value="1"/>
</dbReference>
<dbReference type="NCBIfam" id="NF002381">
    <property type="entry name" value="PRK01388.1"/>
    <property type="match status" value="1"/>
</dbReference>
<dbReference type="PANTHER" id="PTHR47271">
    <property type="entry name" value="ARGININE DEIMINASE"/>
    <property type="match status" value="1"/>
</dbReference>
<dbReference type="PANTHER" id="PTHR47271:SF3">
    <property type="entry name" value="ARGININE DEIMINASE"/>
    <property type="match status" value="1"/>
</dbReference>
<dbReference type="Pfam" id="PF02274">
    <property type="entry name" value="ADI"/>
    <property type="match status" value="1"/>
</dbReference>
<dbReference type="PIRSF" id="PIRSF006356">
    <property type="entry name" value="Arg_deiminase"/>
    <property type="match status" value="1"/>
</dbReference>
<dbReference type="PRINTS" id="PR01466">
    <property type="entry name" value="ARGDEIMINASE"/>
</dbReference>
<dbReference type="SUPFAM" id="SSF55909">
    <property type="entry name" value="Pentein"/>
    <property type="match status" value="1"/>
</dbReference>
<proteinExistence type="inferred from homology"/>
<comment type="catalytic activity">
    <reaction evidence="1">
        <text>L-arginine + H2O = L-citrulline + NH4(+)</text>
        <dbReference type="Rhea" id="RHEA:19597"/>
        <dbReference type="ChEBI" id="CHEBI:15377"/>
        <dbReference type="ChEBI" id="CHEBI:28938"/>
        <dbReference type="ChEBI" id="CHEBI:32682"/>
        <dbReference type="ChEBI" id="CHEBI:57743"/>
        <dbReference type="EC" id="3.5.3.6"/>
    </reaction>
</comment>
<comment type="pathway">
    <text evidence="1">Amino-acid degradation; L-arginine degradation via ADI pathway; carbamoyl phosphate from L-arginine: step 1/2.</text>
</comment>
<comment type="subcellular location">
    <subcellularLocation>
        <location evidence="1">Cytoplasm</location>
    </subcellularLocation>
</comment>
<comment type="similarity">
    <text evidence="1">Belongs to the arginine deiminase family.</text>
</comment>
<organism>
    <name type="scientific">Chelativorans sp. (strain BNC1)</name>
    <dbReference type="NCBI Taxonomy" id="266779"/>
    <lineage>
        <taxon>Bacteria</taxon>
        <taxon>Pseudomonadati</taxon>
        <taxon>Pseudomonadota</taxon>
        <taxon>Alphaproteobacteria</taxon>
        <taxon>Hyphomicrobiales</taxon>
        <taxon>Phyllobacteriaceae</taxon>
        <taxon>Chelativorans</taxon>
    </lineage>
</organism>
<evidence type="ECO:0000255" key="1">
    <source>
        <dbReference type="HAMAP-Rule" id="MF_00242"/>
    </source>
</evidence>
<sequence length="408" mass="45004">MSLVYGVHSEVGKLRRVMVHRPGTALARLTPSNCHELLFDDVIWVKQARVEHMTFVDAMRYRGVEVVFLREMLTETMRIQEARRWLLDRRVNDNTVGVGLADDLHAHLMEIDADALSSILVGGLSKAELPVKTNSVVASVLTPEDFILPPLPNHIFTRDTTCWIYEGVTLNPMRWNARQLETVNIAAIYRFHPDFRDAGFPVWFGDPERSFGAATAEGGDVMPIGNRAVLIGMGERTTAHAVGQIARSLFAHGTAERVIACKLPKERASMHLDTVFTFCDRDLVTIFADVVNAIDAYSLRPGEKPGTVDVRAEEQPLTEVVAGALGLPKLRVVETGGDAYVQEREQWDDGNNVVALEPGVVVGYDRNVYTNTLLRKAGVEVITVPGAELGRGRGGGHCMTCPLIRDAL</sequence>
<reference key="1">
    <citation type="submission" date="2006-06" db="EMBL/GenBank/DDBJ databases">
        <title>Complete sequence of chromosome of Mesorhizobium sp. BNC1.</title>
        <authorList>
            <consortium name="US DOE Joint Genome Institute"/>
            <person name="Copeland A."/>
            <person name="Lucas S."/>
            <person name="Lapidus A."/>
            <person name="Barry K."/>
            <person name="Detter J.C."/>
            <person name="Glavina del Rio T."/>
            <person name="Hammon N."/>
            <person name="Israni S."/>
            <person name="Dalin E."/>
            <person name="Tice H."/>
            <person name="Pitluck S."/>
            <person name="Chertkov O."/>
            <person name="Brettin T."/>
            <person name="Bruce D."/>
            <person name="Han C."/>
            <person name="Tapia R."/>
            <person name="Gilna P."/>
            <person name="Schmutz J."/>
            <person name="Larimer F."/>
            <person name="Land M."/>
            <person name="Hauser L."/>
            <person name="Kyrpides N."/>
            <person name="Mikhailova N."/>
            <person name="Richardson P."/>
        </authorList>
    </citation>
    <scope>NUCLEOTIDE SEQUENCE [LARGE SCALE GENOMIC DNA]</scope>
    <source>
        <strain>BNC1</strain>
    </source>
</reference>
<gene>
    <name evidence="1" type="primary">arcA</name>
    <name type="ordered locus">Meso_2241</name>
</gene>